<dbReference type="EMBL" id="CH408047">
    <property type="protein sequence ID" value="EDV11502.1"/>
    <property type="molecule type" value="Genomic_DNA"/>
</dbReference>
<dbReference type="SMR" id="B3LLP9"/>
<dbReference type="HOGENOM" id="CLU_008912_0_0_1"/>
<dbReference type="OrthoDB" id="35970at4893"/>
<dbReference type="Proteomes" id="UP000008335">
    <property type="component" value="Unassembled WGS sequence"/>
</dbReference>
<dbReference type="GO" id="GO:0005769">
    <property type="term" value="C:early endosome"/>
    <property type="evidence" value="ECO:0007669"/>
    <property type="project" value="TreeGrafter"/>
</dbReference>
<dbReference type="GO" id="GO:0005770">
    <property type="term" value="C:late endosome"/>
    <property type="evidence" value="ECO:0007669"/>
    <property type="project" value="TreeGrafter"/>
</dbReference>
<dbReference type="GO" id="GO:0005886">
    <property type="term" value="C:plasma membrane"/>
    <property type="evidence" value="ECO:0007669"/>
    <property type="project" value="TreeGrafter"/>
</dbReference>
<dbReference type="GO" id="GO:0030133">
    <property type="term" value="C:transport vesicle"/>
    <property type="evidence" value="ECO:0007669"/>
    <property type="project" value="TreeGrafter"/>
</dbReference>
<dbReference type="GO" id="GO:0097422">
    <property type="term" value="C:tubular endosome"/>
    <property type="evidence" value="ECO:0007669"/>
    <property type="project" value="TreeGrafter"/>
</dbReference>
<dbReference type="GO" id="GO:0005085">
    <property type="term" value="F:guanyl-nucleotide exchange factor activity"/>
    <property type="evidence" value="ECO:0007669"/>
    <property type="project" value="TreeGrafter"/>
</dbReference>
<dbReference type="GO" id="GO:0000149">
    <property type="term" value="F:SNARE binding"/>
    <property type="evidence" value="ECO:0007669"/>
    <property type="project" value="TreeGrafter"/>
</dbReference>
<dbReference type="GO" id="GO:0045022">
    <property type="term" value="P:early endosome to late endosome transport"/>
    <property type="evidence" value="ECO:0007669"/>
    <property type="project" value="TreeGrafter"/>
</dbReference>
<dbReference type="Gene3D" id="1.25.40.20">
    <property type="entry name" value="Ankyrin repeat-containing domain"/>
    <property type="match status" value="1"/>
</dbReference>
<dbReference type="Gene3D" id="1.20.1050.80">
    <property type="entry name" value="VPS9 domain"/>
    <property type="match status" value="1"/>
</dbReference>
<dbReference type="InterPro" id="IPR036770">
    <property type="entry name" value="Ankyrin_rpt-contain_sf"/>
</dbReference>
<dbReference type="InterPro" id="IPR051248">
    <property type="entry name" value="UPF0507/Ank_repeat_27"/>
</dbReference>
<dbReference type="InterPro" id="IPR003123">
    <property type="entry name" value="VPS9"/>
</dbReference>
<dbReference type="InterPro" id="IPR037191">
    <property type="entry name" value="VPS9_dom_sf"/>
</dbReference>
<dbReference type="PANTHER" id="PTHR24170">
    <property type="entry name" value="ANKYRIN REPEAT DOMAIN-CONTAINING PROTEIN 27"/>
    <property type="match status" value="1"/>
</dbReference>
<dbReference type="PANTHER" id="PTHR24170:SF1">
    <property type="entry name" value="DOMAIN PROTEIN, PUTATIVE (AFU_ORTHOLOGUE AFUA_1G09870)-RELATED"/>
    <property type="match status" value="1"/>
</dbReference>
<dbReference type="Pfam" id="PF02204">
    <property type="entry name" value="VPS9"/>
    <property type="match status" value="1"/>
</dbReference>
<dbReference type="SUPFAM" id="SSF140860">
    <property type="entry name" value="Pseudo ankyrin repeat-like"/>
    <property type="match status" value="1"/>
</dbReference>
<dbReference type="SUPFAM" id="SSF109993">
    <property type="entry name" value="VPS9 domain"/>
    <property type="match status" value="1"/>
</dbReference>
<dbReference type="PROSITE" id="PS51205">
    <property type="entry name" value="VPS9"/>
    <property type="match status" value="1"/>
</dbReference>
<proteinExistence type="inferred from homology"/>
<reference key="1">
    <citation type="submission" date="2005-03" db="EMBL/GenBank/DDBJ databases">
        <title>Annotation of the Saccharomyces cerevisiae RM11-1a genome.</title>
        <authorList>
            <consortium name="The Broad Institute Genome Sequencing Platform"/>
            <person name="Birren B.W."/>
            <person name="Lander E.S."/>
            <person name="Galagan J.E."/>
            <person name="Nusbaum C."/>
            <person name="Devon K."/>
            <person name="Cuomo C."/>
            <person name="Jaffe D.B."/>
            <person name="Butler J."/>
            <person name="Alvarez P."/>
            <person name="Gnerre S."/>
            <person name="Grabherr M."/>
            <person name="Kleber M."/>
            <person name="Mauceli E.W."/>
            <person name="Brockman W."/>
            <person name="MacCallum I.A."/>
            <person name="Rounsley S."/>
            <person name="Young S.K."/>
            <person name="LaButti K."/>
            <person name="Pushparaj V."/>
            <person name="DeCaprio D."/>
            <person name="Crawford M."/>
            <person name="Koehrsen M."/>
            <person name="Engels R."/>
            <person name="Montgomery P."/>
            <person name="Pearson M."/>
            <person name="Howarth C."/>
            <person name="Larson L."/>
            <person name="Luoma S."/>
            <person name="White J."/>
            <person name="O'Leary S."/>
            <person name="Kodira C.D."/>
            <person name="Zeng Q."/>
            <person name="Yandava C."/>
            <person name="Alvarado L."/>
            <person name="Pratt S."/>
            <person name="Kruglyak L."/>
        </authorList>
    </citation>
    <scope>NUCLEOTIDE SEQUENCE [LARGE SCALE GENOMIC DNA]</scope>
    <source>
        <strain>RM11-1a</strain>
    </source>
</reference>
<accession>B3LLP9</accession>
<feature type="chain" id="PRO_0000393364" description="UPF0507 protein SCRG_01893">
    <location>
        <begin position="1"/>
        <end position="1090"/>
    </location>
</feature>
<feature type="domain" description="VPS9" evidence="1">
    <location>
        <begin position="289"/>
        <end position="436"/>
    </location>
</feature>
<comment type="similarity">
    <text evidence="2">Belongs to the UPF0507 family.</text>
</comment>
<sequence>MSVYHLPTLLNPLVNAIFNCPEPERSPLKKLFANLKTRRFILLAPPSEYLLNYHDVKSKLPLHDLCYNAEFINSYILLMTENSYINTNSRDSHYETLDGKTVVIQWKNNVIHALNGFHIRRRLKILETKILPNFNDYFEGAADFIILFIDQPLNCEFVPNDYLQCFHNYEKIPKNAHAMPNLSIDSFQQERSSFENILHIHPARLTQLGQLFSSYRTLAPGDDPSRSIFESIVQQAFDGMKSDSLFKNFSNLYDLIHDYFELNLYDDIWSRLTTHFKGHEVDTEKYKYFSVNQLLTDFYSKDYGEFELHDITLIERRLHLASKHLQKLALTHSYAEKSKILVETLQKLSGTTEMDSHQLELPDGLNNMTMDADTLISLFVLVVCRSEQKHLKSHLYYLQNFSNNSSSTKFGILGYAVSTLEAVVCYFEDFNKNTGNVAKANTLCEKTKNLLDKLSCENPTNEVEDLATYKDILTYRNEQGQSILSICITNHKNYILLDILSEYETDFPVEDLLEDETIDGSTLLIESIKAGNLEAAKVLIKIMLFNCTEEELVSYINKTDKYARTVAHYLTHEMDILKSIGNYIDWKRKNSSGQTPLFSIFRSYDQPNYEEMVKTAFDIANTWYRKHNSLFDYLDHTDNKGNSLLHVLKTNIPILLQLTKLDINEENYKGLTPLMVYVKYKRLSNIDAITKDRRLILEKVQNSTFFTCFDYAKDHSVLSKIGERGVKDSLFGLIYFHSLRYHNLNATTNITSVSNAEKPFATTVINMKTIQGLLRSILKDNPFTFLPLNTYIDEISHLNRSDLTIIGKTDVTSLLHQLTNCFNVLLFLKKIPENLFTDEASILYWMRINTSKRNQKPSGKENPKTMEPEEINMIQSFLRFNFDEISSFKASLNILRKVLIFINLKSDDFEDAYKGLNEMGRKLINSEASSAFKGIITNHNMFSELSLAELLENVRFLEQCTIQLSSFVQIILFEKIPNWWKHYGEFLALHKSYRKAFPNMVKPKSASDTSSRAPLGGFIETKREQSEQRLAVQIKASSKMLKELGSEIFVAHERLAEELSNYMEFRKACLDQRSLVAFATTNISVLQECV</sequence>
<name>U507_YEAS1</name>
<protein>
    <recommendedName>
        <fullName>UPF0507 protein SCRG_01893</fullName>
    </recommendedName>
</protein>
<organism>
    <name type="scientific">Saccharomyces cerevisiae (strain RM11-1a)</name>
    <name type="common">Baker's yeast</name>
    <dbReference type="NCBI Taxonomy" id="285006"/>
    <lineage>
        <taxon>Eukaryota</taxon>
        <taxon>Fungi</taxon>
        <taxon>Dikarya</taxon>
        <taxon>Ascomycota</taxon>
        <taxon>Saccharomycotina</taxon>
        <taxon>Saccharomycetes</taxon>
        <taxon>Saccharomycetales</taxon>
        <taxon>Saccharomycetaceae</taxon>
        <taxon>Saccharomyces</taxon>
    </lineage>
</organism>
<gene>
    <name type="ORF">SCRG_01893</name>
</gene>
<evidence type="ECO:0000255" key="1">
    <source>
        <dbReference type="PROSITE-ProRule" id="PRU00550"/>
    </source>
</evidence>
<evidence type="ECO:0000305" key="2"/>